<proteinExistence type="inferred from homology"/>
<sequence length="186" mass="20786">MSIVEVKQNAEQKMQQSVDSFKNSLTKIRTGRANPGLLDTVHVDYYGSMVPISQVANVSLLDARTISVSPWEKGMGAKIEKAIRDSDLGLNPAAQGDLIRVPMPAMTEERRKELTKVVRAEGEHAKVAVRNLRRDANEGVKKLLKEKLVSEDDERRAQDEIQKFTDRFIAEVDKLVAGKEQDIMAV</sequence>
<keyword id="KW-0963">Cytoplasm</keyword>
<keyword id="KW-0648">Protein biosynthesis</keyword>
<keyword id="KW-1185">Reference proteome</keyword>
<evidence type="ECO:0000255" key="1">
    <source>
        <dbReference type="HAMAP-Rule" id="MF_00040"/>
    </source>
</evidence>
<protein>
    <recommendedName>
        <fullName evidence="1">Ribosome-recycling factor</fullName>
        <shortName evidence="1">RRF</shortName>
    </recommendedName>
    <alternativeName>
        <fullName evidence="1">Ribosome-releasing factor</fullName>
    </alternativeName>
</protein>
<dbReference type="EMBL" id="CP000316">
    <property type="protein sequence ID" value="ABE44608.1"/>
    <property type="molecule type" value="Genomic_DNA"/>
</dbReference>
<dbReference type="RefSeq" id="WP_011483606.1">
    <property type="nucleotide sequence ID" value="NC_007948.1"/>
</dbReference>
<dbReference type="SMR" id="Q12A34"/>
<dbReference type="STRING" id="296591.Bpro_2692"/>
<dbReference type="KEGG" id="pol:Bpro_2692"/>
<dbReference type="eggNOG" id="COG0233">
    <property type="taxonomic scope" value="Bacteria"/>
</dbReference>
<dbReference type="HOGENOM" id="CLU_073981_2_0_4"/>
<dbReference type="OrthoDB" id="9804006at2"/>
<dbReference type="Proteomes" id="UP000001983">
    <property type="component" value="Chromosome"/>
</dbReference>
<dbReference type="GO" id="GO:0005829">
    <property type="term" value="C:cytosol"/>
    <property type="evidence" value="ECO:0007669"/>
    <property type="project" value="GOC"/>
</dbReference>
<dbReference type="GO" id="GO:0043023">
    <property type="term" value="F:ribosomal large subunit binding"/>
    <property type="evidence" value="ECO:0007669"/>
    <property type="project" value="TreeGrafter"/>
</dbReference>
<dbReference type="GO" id="GO:0002184">
    <property type="term" value="P:cytoplasmic translational termination"/>
    <property type="evidence" value="ECO:0007669"/>
    <property type="project" value="TreeGrafter"/>
</dbReference>
<dbReference type="CDD" id="cd00520">
    <property type="entry name" value="RRF"/>
    <property type="match status" value="1"/>
</dbReference>
<dbReference type="FunFam" id="1.10.132.20:FF:000001">
    <property type="entry name" value="Ribosome-recycling factor"/>
    <property type="match status" value="1"/>
</dbReference>
<dbReference type="FunFam" id="3.30.1360.40:FF:000001">
    <property type="entry name" value="Ribosome-recycling factor"/>
    <property type="match status" value="1"/>
</dbReference>
<dbReference type="Gene3D" id="3.30.1360.40">
    <property type="match status" value="1"/>
</dbReference>
<dbReference type="Gene3D" id="1.10.132.20">
    <property type="entry name" value="Ribosome-recycling factor"/>
    <property type="match status" value="1"/>
</dbReference>
<dbReference type="HAMAP" id="MF_00040">
    <property type="entry name" value="RRF"/>
    <property type="match status" value="1"/>
</dbReference>
<dbReference type="InterPro" id="IPR002661">
    <property type="entry name" value="Ribosome_recyc_fac"/>
</dbReference>
<dbReference type="InterPro" id="IPR023584">
    <property type="entry name" value="Ribosome_recyc_fac_dom"/>
</dbReference>
<dbReference type="InterPro" id="IPR036191">
    <property type="entry name" value="RRF_sf"/>
</dbReference>
<dbReference type="NCBIfam" id="TIGR00496">
    <property type="entry name" value="frr"/>
    <property type="match status" value="1"/>
</dbReference>
<dbReference type="PANTHER" id="PTHR20982:SF3">
    <property type="entry name" value="MITOCHONDRIAL RIBOSOME RECYCLING FACTOR PSEUDO 1"/>
    <property type="match status" value="1"/>
</dbReference>
<dbReference type="PANTHER" id="PTHR20982">
    <property type="entry name" value="RIBOSOME RECYCLING FACTOR"/>
    <property type="match status" value="1"/>
</dbReference>
<dbReference type="Pfam" id="PF01765">
    <property type="entry name" value="RRF"/>
    <property type="match status" value="1"/>
</dbReference>
<dbReference type="SUPFAM" id="SSF55194">
    <property type="entry name" value="Ribosome recycling factor, RRF"/>
    <property type="match status" value="1"/>
</dbReference>
<reference key="1">
    <citation type="journal article" date="2008" name="Appl. Environ. Microbiol.">
        <title>The genome of Polaromonas sp. strain JS666: insights into the evolution of a hydrocarbon- and xenobiotic-degrading bacterium, and features of relevance to biotechnology.</title>
        <authorList>
            <person name="Mattes T.E."/>
            <person name="Alexander A.K."/>
            <person name="Richardson P.M."/>
            <person name="Munk A.C."/>
            <person name="Han C.S."/>
            <person name="Stothard P."/>
            <person name="Coleman N.V."/>
        </authorList>
    </citation>
    <scope>NUCLEOTIDE SEQUENCE [LARGE SCALE GENOMIC DNA]</scope>
    <source>
        <strain>JS666 / ATCC BAA-500</strain>
    </source>
</reference>
<organism>
    <name type="scientific">Polaromonas sp. (strain JS666 / ATCC BAA-500)</name>
    <dbReference type="NCBI Taxonomy" id="296591"/>
    <lineage>
        <taxon>Bacteria</taxon>
        <taxon>Pseudomonadati</taxon>
        <taxon>Pseudomonadota</taxon>
        <taxon>Betaproteobacteria</taxon>
        <taxon>Burkholderiales</taxon>
        <taxon>Comamonadaceae</taxon>
        <taxon>Polaromonas</taxon>
    </lineage>
</organism>
<feature type="chain" id="PRO_1000003222" description="Ribosome-recycling factor">
    <location>
        <begin position="1"/>
        <end position="186"/>
    </location>
</feature>
<name>RRF_POLSJ</name>
<accession>Q12A34</accession>
<gene>
    <name evidence="1" type="primary">frr</name>
    <name type="ordered locus">Bpro_2692</name>
</gene>
<comment type="function">
    <text evidence="1">Responsible for the release of ribosomes from messenger RNA at the termination of protein biosynthesis. May increase the efficiency of translation by recycling ribosomes from one round of translation to another.</text>
</comment>
<comment type="subcellular location">
    <subcellularLocation>
        <location evidence="1">Cytoplasm</location>
    </subcellularLocation>
</comment>
<comment type="similarity">
    <text evidence="1">Belongs to the RRF family.</text>
</comment>